<feature type="chain" id="PRO_1000095509" description="Glutamine--tRNA ligase">
    <location>
        <begin position="1"/>
        <end position="555"/>
    </location>
</feature>
<feature type="region of interest" description="Interaction with tRNA" evidence="1">
    <location>
        <begin position="317"/>
        <end position="324"/>
    </location>
</feature>
<feature type="short sequence motif" description="'HIGH' region" evidence="1">
    <location>
        <begin position="34"/>
        <end position="44"/>
    </location>
</feature>
<feature type="short sequence motif" description="'KMSKS' region" evidence="1">
    <location>
        <begin position="268"/>
        <end position="272"/>
    </location>
</feature>
<feature type="binding site" evidence="1">
    <location>
        <begin position="35"/>
        <end position="37"/>
    </location>
    <ligand>
        <name>ATP</name>
        <dbReference type="ChEBI" id="CHEBI:30616"/>
    </ligand>
</feature>
<feature type="binding site" evidence="1">
    <location>
        <begin position="41"/>
        <end position="47"/>
    </location>
    <ligand>
        <name>ATP</name>
        <dbReference type="ChEBI" id="CHEBI:30616"/>
    </ligand>
</feature>
<feature type="binding site" evidence="1">
    <location>
        <position position="67"/>
    </location>
    <ligand>
        <name>L-glutamine</name>
        <dbReference type="ChEBI" id="CHEBI:58359"/>
    </ligand>
</feature>
<feature type="binding site" evidence="1">
    <location>
        <position position="212"/>
    </location>
    <ligand>
        <name>L-glutamine</name>
        <dbReference type="ChEBI" id="CHEBI:58359"/>
    </ligand>
</feature>
<feature type="binding site" evidence="1">
    <location>
        <position position="231"/>
    </location>
    <ligand>
        <name>ATP</name>
        <dbReference type="ChEBI" id="CHEBI:30616"/>
    </ligand>
</feature>
<feature type="binding site" evidence="1">
    <location>
        <begin position="261"/>
        <end position="262"/>
    </location>
    <ligand>
        <name>ATP</name>
        <dbReference type="ChEBI" id="CHEBI:30616"/>
    </ligand>
</feature>
<feature type="binding site" evidence="1">
    <location>
        <begin position="269"/>
        <end position="271"/>
    </location>
    <ligand>
        <name>ATP</name>
        <dbReference type="ChEBI" id="CHEBI:30616"/>
    </ligand>
</feature>
<dbReference type="EC" id="6.1.1.18" evidence="1"/>
<dbReference type="EMBL" id="CP001144">
    <property type="protein sequence ID" value="ACH76317.1"/>
    <property type="molecule type" value="Genomic_DNA"/>
</dbReference>
<dbReference type="RefSeq" id="WP_001287181.1">
    <property type="nucleotide sequence ID" value="NC_011205.1"/>
</dbReference>
<dbReference type="SMR" id="B5FNC1"/>
<dbReference type="KEGG" id="sed:SeD_A0792"/>
<dbReference type="HOGENOM" id="CLU_001882_2_3_6"/>
<dbReference type="Proteomes" id="UP000008322">
    <property type="component" value="Chromosome"/>
</dbReference>
<dbReference type="GO" id="GO:0005829">
    <property type="term" value="C:cytosol"/>
    <property type="evidence" value="ECO:0007669"/>
    <property type="project" value="TreeGrafter"/>
</dbReference>
<dbReference type="GO" id="GO:0005524">
    <property type="term" value="F:ATP binding"/>
    <property type="evidence" value="ECO:0007669"/>
    <property type="project" value="UniProtKB-UniRule"/>
</dbReference>
<dbReference type="GO" id="GO:0004819">
    <property type="term" value="F:glutamine-tRNA ligase activity"/>
    <property type="evidence" value="ECO:0007669"/>
    <property type="project" value="UniProtKB-UniRule"/>
</dbReference>
<dbReference type="GO" id="GO:0006425">
    <property type="term" value="P:glutaminyl-tRNA aminoacylation"/>
    <property type="evidence" value="ECO:0007669"/>
    <property type="project" value="InterPro"/>
</dbReference>
<dbReference type="GO" id="GO:0006424">
    <property type="term" value="P:glutamyl-tRNA aminoacylation"/>
    <property type="evidence" value="ECO:0007669"/>
    <property type="project" value="UniProtKB-UniRule"/>
</dbReference>
<dbReference type="CDD" id="cd00807">
    <property type="entry name" value="GlnRS_core"/>
    <property type="match status" value="1"/>
</dbReference>
<dbReference type="FunFam" id="1.10.1160.10:FF:000001">
    <property type="entry name" value="Glutamine--tRNA ligase"/>
    <property type="match status" value="1"/>
</dbReference>
<dbReference type="FunFam" id="2.40.240.10:FF:000001">
    <property type="entry name" value="Glutamine--tRNA ligase"/>
    <property type="match status" value="1"/>
</dbReference>
<dbReference type="FunFam" id="2.40.240.10:FF:000003">
    <property type="entry name" value="Glutamine--tRNA ligase"/>
    <property type="match status" value="1"/>
</dbReference>
<dbReference type="FunFam" id="3.90.800.10:FF:000001">
    <property type="entry name" value="Glutamine--tRNA ligase"/>
    <property type="match status" value="1"/>
</dbReference>
<dbReference type="FunFam" id="3.40.50.620:FF:000037">
    <property type="entry name" value="Glutamine--tRNA ligase cytoplasmic"/>
    <property type="match status" value="1"/>
</dbReference>
<dbReference type="Gene3D" id="1.10.1160.10">
    <property type="entry name" value="Glutamyl-trna Synthetase, Domain 2"/>
    <property type="match status" value="1"/>
</dbReference>
<dbReference type="Gene3D" id="3.90.800.10">
    <property type="entry name" value="Glutamyl-tRNA Synthetase, Domain 3"/>
    <property type="match status" value="1"/>
</dbReference>
<dbReference type="Gene3D" id="3.40.50.620">
    <property type="entry name" value="HUPs"/>
    <property type="match status" value="1"/>
</dbReference>
<dbReference type="Gene3D" id="2.40.240.10">
    <property type="entry name" value="Ribosomal Protein L25, Chain P"/>
    <property type="match status" value="2"/>
</dbReference>
<dbReference type="HAMAP" id="MF_00126">
    <property type="entry name" value="Gln_tRNA_synth"/>
    <property type="match status" value="1"/>
</dbReference>
<dbReference type="InterPro" id="IPR001412">
    <property type="entry name" value="aa-tRNA-synth_I_CS"/>
</dbReference>
<dbReference type="InterPro" id="IPR004514">
    <property type="entry name" value="Gln-tRNA-synth"/>
</dbReference>
<dbReference type="InterPro" id="IPR050132">
    <property type="entry name" value="Gln/Glu-tRNA_Ligase"/>
</dbReference>
<dbReference type="InterPro" id="IPR022861">
    <property type="entry name" value="Gln_tRNA_ligase_bac"/>
</dbReference>
<dbReference type="InterPro" id="IPR000924">
    <property type="entry name" value="Glu/Gln-tRNA-synth"/>
</dbReference>
<dbReference type="InterPro" id="IPR020058">
    <property type="entry name" value="Glu/Gln-tRNA-synth_Ib_cat-dom"/>
</dbReference>
<dbReference type="InterPro" id="IPR020059">
    <property type="entry name" value="Glu/Gln-tRNA-synth_Ib_codon-bd"/>
</dbReference>
<dbReference type="InterPro" id="IPR020061">
    <property type="entry name" value="Glu_tRNA_lig_a-bdl"/>
</dbReference>
<dbReference type="InterPro" id="IPR020056">
    <property type="entry name" value="Rbsml_bL25/Gln-tRNA_synth_N"/>
</dbReference>
<dbReference type="InterPro" id="IPR011035">
    <property type="entry name" value="Ribosomal_bL25/Gln-tRNA_synth"/>
</dbReference>
<dbReference type="InterPro" id="IPR014729">
    <property type="entry name" value="Rossmann-like_a/b/a_fold"/>
</dbReference>
<dbReference type="InterPro" id="IPR049437">
    <property type="entry name" value="tRNA-synt_1c_C2"/>
</dbReference>
<dbReference type="NCBIfam" id="TIGR00440">
    <property type="entry name" value="glnS"/>
    <property type="match status" value="1"/>
</dbReference>
<dbReference type="NCBIfam" id="NF011291">
    <property type="entry name" value="PRK14703.1"/>
    <property type="match status" value="1"/>
</dbReference>
<dbReference type="PANTHER" id="PTHR43097:SF5">
    <property type="entry name" value="GLUTAMATE--TRNA LIGASE"/>
    <property type="match status" value="1"/>
</dbReference>
<dbReference type="PANTHER" id="PTHR43097">
    <property type="entry name" value="GLUTAMINE-TRNA LIGASE"/>
    <property type="match status" value="1"/>
</dbReference>
<dbReference type="Pfam" id="PF00749">
    <property type="entry name" value="tRNA-synt_1c"/>
    <property type="match status" value="1"/>
</dbReference>
<dbReference type="Pfam" id="PF03950">
    <property type="entry name" value="tRNA-synt_1c_C"/>
    <property type="match status" value="1"/>
</dbReference>
<dbReference type="Pfam" id="PF20974">
    <property type="entry name" value="tRNA-synt_1c_C2"/>
    <property type="match status" value="1"/>
</dbReference>
<dbReference type="PRINTS" id="PR00987">
    <property type="entry name" value="TRNASYNTHGLU"/>
</dbReference>
<dbReference type="SUPFAM" id="SSF52374">
    <property type="entry name" value="Nucleotidylyl transferase"/>
    <property type="match status" value="1"/>
</dbReference>
<dbReference type="SUPFAM" id="SSF50715">
    <property type="entry name" value="Ribosomal protein L25-like"/>
    <property type="match status" value="1"/>
</dbReference>
<dbReference type="PROSITE" id="PS00178">
    <property type="entry name" value="AA_TRNA_LIGASE_I"/>
    <property type="match status" value="1"/>
</dbReference>
<organism>
    <name type="scientific">Salmonella dublin (strain CT_02021853)</name>
    <dbReference type="NCBI Taxonomy" id="439851"/>
    <lineage>
        <taxon>Bacteria</taxon>
        <taxon>Pseudomonadati</taxon>
        <taxon>Pseudomonadota</taxon>
        <taxon>Gammaproteobacteria</taxon>
        <taxon>Enterobacterales</taxon>
        <taxon>Enterobacteriaceae</taxon>
        <taxon>Salmonella</taxon>
    </lineage>
</organism>
<proteinExistence type="inferred from homology"/>
<sequence length="555" mass="63538">MSEAEARPTNFIRQIIDEDLASGKHTTVHTRFPPEPNGYLHIGHAKSICLNFGIAQDYQGQCNLRFDDTNPVKEDIEYVDSIKNDVEWLGFHWSGDIRYSSDYFDQLHAYAVELINKGLAYVDELTPEQIREYRGTLTAPGKNSPFRDRSVEENLALFEKMRTGGFEEGKACLRAKIDMASPFIVMRDPVLYRIKFAEHHQTGNKWCIYPMYDFTHCISDALEGITHSLCTLEFQDNRRLYDWVLDNITIPVHPRQYEFSRLNLEYTVMSKRKLNLLVTDKHVEGWDDPRMPTISGLRRRGYTAASIREFCKRIGVTKQDNTIEMASLESCIREDLNENAPRAMAVIDPVKLVIENYPQGESEMVTMPNHPNKPEMGSREVPFSGEIWIDRADFREEANKQYKRLVMGKEVRLRNAYVIKAERVEKDAEGNITTIFCTYDADTLSKDPADGRKVKGVIHWVSAAHALPIEIRLYDRLFSVPNPGAAEDFLSVINPESLVIKQGYGEPSLKAAVAGKAFQFEREGYFCLDSRYATADKLVFNRTVGLRDTWAKAGE</sequence>
<name>SYQ_SALDC</name>
<gene>
    <name evidence="1" type="primary">glnS</name>
    <name type="ordered locus">SeD_A0792</name>
</gene>
<keyword id="KW-0030">Aminoacyl-tRNA synthetase</keyword>
<keyword id="KW-0067">ATP-binding</keyword>
<keyword id="KW-0963">Cytoplasm</keyword>
<keyword id="KW-0436">Ligase</keyword>
<keyword id="KW-0547">Nucleotide-binding</keyword>
<keyword id="KW-0648">Protein biosynthesis</keyword>
<accession>B5FNC1</accession>
<evidence type="ECO:0000255" key="1">
    <source>
        <dbReference type="HAMAP-Rule" id="MF_00126"/>
    </source>
</evidence>
<protein>
    <recommendedName>
        <fullName evidence="1">Glutamine--tRNA ligase</fullName>
        <ecNumber evidence="1">6.1.1.18</ecNumber>
    </recommendedName>
    <alternativeName>
        <fullName evidence="1">Glutaminyl-tRNA synthetase</fullName>
        <shortName evidence="1">GlnRS</shortName>
    </alternativeName>
</protein>
<comment type="catalytic activity">
    <reaction evidence="1">
        <text>tRNA(Gln) + L-glutamine + ATP = L-glutaminyl-tRNA(Gln) + AMP + diphosphate</text>
        <dbReference type="Rhea" id="RHEA:20121"/>
        <dbReference type="Rhea" id="RHEA-COMP:9662"/>
        <dbReference type="Rhea" id="RHEA-COMP:9681"/>
        <dbReference type="ChEBI" id="CHEBI:30616"/>
        <dbReference type="ChEBI" id="CHEBI:33019"/>
        <dbReference type="ChEBI" id="CHEBI:58359"/>
        <dbReference type="ChEBI" id="CHEBI:78442"/>
        <dbReference type="ChEBI" id="CHEBI:78521"/>
        <dbReference type="ChEBI" id="CHEBI:456215"/>
        <dbReference type="EC" id="6.1.1.18"/>
    </reaction>
</comment>
<comment type="subunit">
    <text evidence="1">Monomer.</text>
</comment>
<comment type="subcellular location">
    <subcellularLocation>
        <location evidence="1">Cytoplasm</location>
    </subcellularLocation>
</comment>
<comment type="similarity">
    <text evidence="1">Belongs to the class-I aminoacyl-tRNA synthetase family.</text>
</comment>
<reference key="1">
    <citation type="journal article" date="2011" name="J. Bacteriol.">
        <title>Comparative genomics of 28 Salmonella enterica isolates: evidence for CRISPR-mediated adaptive sublineage evolution.</title>
        <authorList>
            <person name="Fricke W.F."/>
            <person name="Mammel M.K."/>
            <person name="McDermott P.F."/>
            <person name="Tartera C."/>
            <person name="White D.G."/>
            <person name="Leclerc J.E."/>
            <person name="Ravel J."/>
            <person name="Cebula T.A."/>
        </authorList>
    </citation>
    <scope>NUCLEOTIDE SEQUENCE [LARGE SCALE GENOMIC DNA]</scope>
    <source>
        <strain>CT_02021853</strain>
    </source>
</reference>